<organism>
    <name type="scientific">Homo sapiens</name>
    <name type="common">Human</name>
    <dbReference type="NCBI Taxonomy" id="9606"/>
    <lineage>
        <taxon>Eukaryota</taxon>
        <taxon>Metazoa</taxon>
        <taxon>Chordata</taxon>
        <taxon>Craniata</taxon>
        <taxon>Vertebrata</taxon>
        <taxon>Euteleostomi</taxon>
        <taxon>Mammalia</taxon>
        <taxon>Eutheria</taxon>
        <taxon>Euarchontoglires</taxon>
        <taxon>Primates</taxon>
        <taxon>Haplorrhini</taxon>
        <taxon>Catarrhini</taxon>
        <taxon>Hominidae</taxon>
        <taxon>Homo</taxon>
    </lineage>
</organism>
<dbReference type="EMBL" id="AF361219">
    <property type="protein sequence ID" value="AAL99632.1"/>
    <property type="molecule type" value="mRNA"/>
</dbReference>
<dbReference type="EMBL" id="AF361221">
    <property type="protein sequence ID" value="AAL99634.1"/>
    <property type="status" value="ALT_INIT"/>
    <property type="molecule type" value="mRNA"/>
</dbReference>
<dbReference type="EMBL" id="AK000135">
    <property type="protein sequence ID" value="BAA90966.1"/>
    <property type="status" value="ALT_INIT"/>
    <property type="molecule type" value="mRNA"/>
</dbReference>
<dbReference type="EMBL" id="AK022526">
    <property type="protein sequence ID" value="BAB14078.1"/>
    <property type="status" value="ALT_INIT"/>
    <property type="molecule type" value="mRNA"/>
</dbReference>
<dbReference type="EMBL" id="AK023054">
    <property type="protein sequence ID" value="BAB14380.1"/>
    <property type="molecule type" value="mRNA"/>
</dbReference>
<dbReference type="EMBL" id="AK025510">
    <property type="protein sequence ID" value="BAB15156.1"/>
    <property type="molecule type" value="mRNA"/>
</dbReference>
<dbReference type="EMBL" id="AK225757">
    <property type="status" value="NOT_ANNOTATED_CDS"/>
    <property type="molecule type" value="mRNA"/>
</dbReference>
<dbReference type="EMBL" id="AC005746">
    <property type="status" value="NOT_ANNOTATED_CDS"/>
    <property type="molecule type" value="Genomic_DNA"/>
</dbReference>
<dbReference type="EMBL" id="AC005856">
    <property type="status" value="NOT_ANNOTATED_CDS"/>
    <property type="molecule type" value="Genomic_DNA"/>
</dbReference>
<dbReference type="EMBL" id="AC005884">
    <property type="status" value="NOT_ANNOTATED_CDS"/>
    <property type="molecule type" value="Genomic_DNA"/>
</dbReference>
<dbReference type="EMBL" id="AC015876">
    <property type="status" value="NOT_ANNOTATED_CDS"/>
    <property type="molecule type" value="Genomic_DNA"/>
</dbReference>
<dbReference type="EMBL" id="AC079005">
    <property type="status" value="NOT_ANNOTATED_CDS"/>
    <property type="molecule type" value="Genomic_DNA"/>
</dbReference>
<dbReference type="EMBL" id="AC110602">
    <property type="status" value="NOT_ANNOTATED_CDS"/>
    <property type="molecule type" value="Genomic_DNA"/>
</dbReference>
<dbReference type="EMBL" id="CH471179">
    <property type="protein sequence ID" value="EAW51414.1"/>
    <property type="molecule type" value="Genomic_DNA"/>
</dbReference>
<dbReference type="EMBL" id="BC001250">
    <property type="protein sequence ID" value="AAH01250.2"/>
    <property type="molecule type" value="mRNA"/>
</dbReference>
<dbReference type="EMBL" id="BC117275">
    <property type="protein sequence ID" value="AAI17276.1"/>
    <property type="molecule type" value="mRNA"/>
</dbReference>
<dbReference type="EMBL" id="BC143386">
    <property type="protein sequence ID" value="AAI43387.1"/>
    <property type="molecule type" value="mRNA"/>
</dbReference>
<dbReference type="EMBL" id="AJ511332">
    <property type="protein sequence ID" value="CAD54076.1"/>
    <property type="status" value="ALT_FRAME"/>
    <property type="molecule type" value="mRNA"/>
</dbReference>
<dbReference type="EMBL" id="AJ518105">
    <property type="protein sequence ID" value="CAD57723.1"/>
    <property type="molecule type" value="mRNA"/>
</dbReference>
<dbReference type="EMBL" id="AL831895">
    <property type="protein sequence ID" value="CAD38568.1"/>
    <property type="molecule type" value="mRNA"/>
</dbReference>
<dbReference type="EMBL" id="AF260268">
    <property type="protein sequence ID" value="AAF70324.1"/>
    <property type="status" value="ALT_FRAME"/>
    <property type="molecule type" value="mRNA"/>
</dbReference>
<dbReference type="CCDS" id="CCDS11626.1">
    <molecule id="Q9H6U6-2"/>
</dbReference>
<dbReference type="CCDS" id="CCDS45749.1">
    <molecule id="Q9H6U6-1"/>
</dbReference>
<dbReference type="CCDS" id="CCDS82176.1">
    <molecule id="Q9H6U6-8"/>
</dbReference>
<dbReference type="CCDS" id="CCDS82177.1">
    <molecule id="Q9H6U6-7"/>
</dbReference>
<dbReference type="CCDS" id="CCDS82178.1">
    <molecule id="Q9H6U6-3"/>
</dbReference>
<dbReference type="RefSeq" id="NP_001092902.1">
    <molecule id="Q9H6U6-1"/>
    <property type="nucleotide sequence ID" value="NM_001099432.3"/>
</dbReference>
<dbReference type="RefSeq" id="NP_001307399.1">
    <molecule id="Q9H6U6-7"/>
    <property type="nucleotide sequence ID" value="NM_001320470.3"/>
</dbReference>
<dbReference type="RefSeq" id="NP_001317342.1">
    <molecule id="Q9H6U6-8"/>
    <property type="nucleotide sequence ID" value="NM_001330413.2"/>
</dbReference>
<dbReference type="RefSeq" id="NP_001317343.1">
    <molecule id="Q9H6U6-3"/>
    <property type="nucleotide sequence ID" value="NM_001330414.2"/>
</dbReference>
<dbReference type="RefSeq" id="NP_060149.3">
    <molecule id="Q9H6U6-2"/>
    <property type="nucleotide sequence ID" value="NM_017679.3"/>
</dbReference>
<dbReference type="BioGRID" id="120182">
    <property type="interactions" value="82"/>
</dbReference>
<dbReference type="FunCoup" id="Q9H6U6">
    <property type="interactions" value="1952"/>
</dbReference>
<dbReference type="IntAct" id="Q9H6U6">
    <property type="interactions" value="52"/>
</dbReference>
<dbReference type="MINT" id="Q9H6U6"/>
<dbReference type="STRING" id="9606.ENSP00000468592"/>
<dbReference type="GlyGen" id="Q9H6U6">
    <property type="glycosylation" value="1 site, 1 O-linked glycan (1 site)"/>
</dbReference>
<dbReference type="iPTMnet" id="Q9H6U6"/>
<dbReference type="MetOSite" id="Q9H6U6"/>
<dbReference type="PhosphoSitePlus" id="Q9H6U6"/>
<dbReference type="BioMuta" id="BCAS3"/>
<dbReference type="DMDM" id="313104248"/>
<dbReference type="jPOST" id="Q9H6U6"/>
<dbReference type="MassIVE" id="Q9H6U6"/>
<dbReference type="PaxDb" id="9606-ENSP00000375067"/>
<dbReference type="PeptideAtlas" id="Q9H6U6"/>
<dbReference type="ProteomicsDB" id="81034">
    <molecule id="Q9H6U6-1"/>
</dbReference>
<dbReference type="ProteomicsDB" id="81035">
    <molecule id="Q9H6U6-2"/>
</dbReference>
<dbReference type="ProteomicsDB" id="81036">
    <molecule id="Q9H6U6-3"/>
</dbReference>
<dbReference type="ProteomicsDB" id="81037">
    <molecule id="Q9H6U6-6"/>
</dbReference>
<dbReference type="ProteomicsDB" id="81038">
    <molecule id="Q9H6U6-7"/>
</dbReference>
<dbReference type="ProteomicsDB" id="81039">
    <molecule id="Q9H6U6-8"/>
</dbReference>
<dbReference type="Pumba" id="Q9H6U6"/>
<dbReference type="Antibodypedia" id="9303">
    <property type="antibodies" value="226 antibodies from 36 providers"/>
</dbReference>
<dbReference type="DNASU" id="54828"/>
<dbReference type="Ensembl" id="ENST00000390652.9">
    <molecule id="Q9H6U6-1"/>
    <property type="protein sequence ID" value="ENSP00000375067.4"/>
    <property type="gene ID" value="ENSG00000141376.24"/>
</dbReference>
<dbReference type="Ensembl" id="ENST00000407086.8">
    <molecule id="Q9H6U6-2"/>
    <property type="protein sequence ID" value="ENSP00000385323.2"/>
    <property type="gene ID" value="ENSG00000141376.24"/>
</dbReference>
<dbReference type="Ensembl" id="ENST00000408905.7">
    <molecule id="Q9H6U6-3"/>
    <property type="protein sequence ID" value="ENSP00000386173.2"/>
    <property type="gene ID" value="ENSG00000141376.24"/>
</dbReference>
<dbReference type="Ensembl" id="ENST00000588462.5">
    <molecule id="Q9H6U6-8"/>
    <property type="protein sequence ID" value="ENSP00000468592.1"/>
    <property type="gene ID" value="ENSG00000141376.24"/>
</dbReference>
<dbReference type="Ensembl" id="ENST00000588874.5">
    <molecule id="Q9H6U6-6"/>
    <property type="protein sequence ID" value="ENSP00000464825.1"/>
    <property type="gene ID" value="ENSG00000141376.24"/>
</dbReference>
<dbReference type="Ensembl" id="ENST00000589222.5">
    <molecule id="Q9H6U6-7"/>
    <property type="protein sequence ID" value="ENSP00000466078.1"/>
    <property type="gene ID" value="ENSG00000141376.24"/>
</dbReference>
<dbReference type="GeneID" id="54828"/>
<dbReference type="KEGG" id="hsa:54828"/>
<dbReference type="MANE-Select" id="ENST00000407086.8">
    <molecule id="Q9H6U6-2"/>
    <property type="protein sequence ID" value="ENSP00000385323.2"/>
    <property type="RefSeq nucleotide sequence ID" value="NM_017679.5"/>
    <property type="RefSeq protein sequence ID" value="NP_060149.3"/>
</dbReference>
<dbReference type="UCSC" id="uc002iyu.5">
    <molecule id="Q9H6U6-1"/>
    <property type="organism name" value="human"/>
</dbReference>
<dbReference type="AGR" id="HGNC:14347"/>
<dbReference type="CTD" id="54828"/>
<dbReference type="DisGeNET" id="54828"/>
<dbReference type="GeneCards" id="BCAS3"/>
<dbReference type="HGNC" id="HGNC:14347">
    <property type="gene designation" value="BCAS3"/>
</dbReference>
<dbReference type="HPA" id="ENSG00000141376">
    <property type="expression patterns" value="Low tissue specificity"/>
</dbReference>
<dbReference type="MalaCards" id="BCAS3"/>
<dbReference type="MIM" id="607470">
    <property type="type" value="gene"/>
</dbReference>
<dbReference type="MIM" id="619641">
    <property type="type" value="phenotype"/>
</dbReference>
<dbReference type="neXtProt" id="NX_Q9H6U6"/>
<dbReference type="OpenTargets" id="ENSG00000141376"/>
<dbReference type="Orphanet" id="528084">
    <property type="disease" value="Non-specific syndromic intellectual disability"/>
</dbReference>
<dbReference type="PharmGKB" id="PA25286"/>
<dbReference type="VEuPathDB" id="HostDB:ENSG00000141376"/>
<dbReference type="eggNOG" id="KOG2109">
    <property type="taxonomic scope" value="Eukaryota"/>
</dbReference>
<dbReference type="eggNOG" id="KOG4415">
    <property type="taxonomic scope" value="Eukaryota"/>
</dbReference>
<dbReference type="GeneTree" id="ENSGT00390000006454"/>
<dbReference type="InParanoid" id="Q9H6U6"/>
<dbReference type="OMA" id="ETHTAKR"/>
<dbReference type="OrthoDB" id="25778at2759"/>
<dbReference type="PAN-GO" id="Q9H6U6">
    <property type="GO annotations" value="2 GO annotations based on evolutionary models"/>
</dbReference>
<dbReference type="PhylomeDB" id="Q9H6U6"/>
<dbReference type="TreeFam" id="TF105856"/>
<dbReference type="PathwayCommons" id="Q9H6U6"/>
<dbReference type="SignaLink" id="Q9H6U6"/>
<dbReference type="BioGRID-ORCS" id="54828">
    <property type="hits" value="39 hits in 1167 CRISPR screens"/>
</dbReference>
<dbReference type="ChiTaRS" id="BCAS3">
    <property type="organism name" value="human"/>
</dbReference>
<dbReference type="GeneWiki" id="BCAS3"/>
<dbReference type="GenomeRNAi" id="54828"/>
<dbReference type="Pharos" id="Q9H6U6">
    <property type="development level" value="Tbio"/>
</dbReference>
<dbReference type="PRO" id="PR:Q9H6U6"/>
<dbReference type="Proteomes" id="UP000005640">
    <property type="component" value="Chromosome 17"/>
</dbReference>
<dbReference type="RNAct" id="Q9H6U6">
    <property type="molecule type" value="protein"/>
</dbReference>
<dbReference type="Bgee" id="ENSG00000141376">
    <property type="expression patterns" value="Expressed in colonic epithelium and 143 other cell types or tissues"/>
</dbReference>
<dbReference type="ExpressionAtlas" id="Q9H6U6">
    <property type="expression patterns" value="baseline and differential"/>
</dbReference>
<dbReference type="GO" id="GO:0031252">
    <property type="term" value="C:cell leading edge"/>
    <property type="evidence" value="ECO:0000250"/>
    <property type="project" value="UniProtKB"/>
</dbReference>
<dbReference type="GO" id="GO:0005737">
    <property type="term" value="C:cytoplasm"/>
    <property type="evidence" value="ECO:0000314"/>
    <property type="project" value="UniProtKB"/>
</dbReference>
<dbReference type="GO" id="GO:0005881">
    <property type="term" value="C:cytoplasmic microtubule"/>
    <property type="evidence" value="ECO:0000250"/>
    <property type="project" value="UniProtKB"/>
</dbReference>
<dbReference type="GO" id="GO:0000791">
    <property type="term" value="C:euchromatin"/>
    <property type="evidence" value="ECO:0000314"/>
    <property type="project" value="UniProtKB"/>
</dbReference>
<dbReference type="GO" id="GO:0045111">
    <property type="term" value="C:intermediate filament cytoskeleton"/>
    <property type="evidence" value="ECO:0000250"/>
    <property type="project" value="UniProtKB"/>
</dbReference>
<dbReference type="GO" id="GO:0005634">
    <property type="term" value="C:nucleus"/>
    <property type="evidence" value="ECO:0000314"/>
    <property type="project" value="UniProtKB"/>
</dbReference>
<dbReference type="GO" id="GO:0000407">
    <property type="term" value="C:phagophore assembly site"/>
    <property type="evidence" value="ECO:0000314"/>
    <property type="project" value="UniProtKB"/>
</dbReference>
<dbReference type="GO" id="GO:0010698">
    <property type="term" value="F:acetyltransferase activator activity"/>
    <property type="evidence" value="ECO:0000314"/>
    <property type="project" value="UniProtKB"/>
</dbReference>
<dbReference type="GO" id="GO:0048487">
    <property type="term" value="F:beta-tubulin binding"/>
    <property type="evidence" value="ECO:0000314"/>
    <property type="project" value="UniProtKB"/>
</dbReference>
<dbReference type="GO" id="GO:0003682">
    <property type="term" value="F:chromatin binding"/>
    <property type="evidence" value="ECO:0000314"/>
    <property type="project" value="UniProtKB"/>
</dbReference>
<dbReference type="GO" id="GO:0035035">
    <property type="term" value="F:histone acetyltransferase binding"/>
    <property type="evidence" value="ECO:0000353"/>
    <property type="project" value="UniProtKB"/>
</dbReference>
<dbReference type="GO" id="GO:0042393">
    <property type="term" value="F:histone binding"/>
    <property type="evidence" value="ECO:0000314"/>
    <property type="project" value="UniProtKB"/>
</dbReference>
<dbReference type="GO" id="GO:0016922">
    <property type="term" value="F:nuclear receptor binding"/>
    <property type="evidence" value="ECO:0000353"/>
    <property type="project" value="UniProtKB"/>
</dbReference>
<dbReference type="GO" id="GO:0035091">
    <property type="term" value="F:phosphatidylinositol binding"/>
    <property type="evidence" value="ECO:0000314"/>
    <property type="project" value="UniProtKB"/>
</dbReference>
<dbReference type="GO" id="GO:0001525">
    <property type="term" value="P:angiogenesis"/>
    <property type="evidence" value="ECO:0007669"/>
    <property type="project" value="UniProtKB-KW"/>
</dbReference>
<dbReference type="GO" id="GO:0006914">
    <property type="term" value="P:autophagy"/>
    <property type="evidence" value="ECO:0007669"/>
    <property type="project" value="InterPro"/>
</dbReference>
<dbReference type="GO" id="GO:0007267">
    <property type="term" value="P:cell-cell signaling"/>
    <property type="evidence" value="ECO:0000250"/>
    <property type="project" value="UniProtKB"/>
</dbReference>
<dbReference type="GO" id="GO:0071391">
    <property type="term" value="P:cellular response to estrogen stimulus"/>
    <property type="evidence" value="ECO:0000314"/>
    <property type="project" value="UniProtKB"/>
</dbReference>
<dbReference type="GO" id="GO:0043085">
    <property type="term" value="P:positive regulation of catalytic activity"/>
    <property type="evidence" value="ECO:0000314"/>
    <property type="project" value="UniProtKB"/>
</dbReference>
<dbReference type="GO" id="GO:0010595">
    <property type="term" value="P:positive regulation of endothelial cell migration"/>
    <property type="evidence" value="ECO:0000250"/>
    <property type="project" value="UniProtKB"/>
</dbReference>
<dbReference type="GO" id="GO:0045944">
    <property type="term" value="P:positive regulation of transcription by RNA polymerase II"/>
    <property type="evidence" value="ECO:0000314"/>
    <property type="project" value="UniProtKB"/>
</dbReference>
<dbReference type="GO" id="GO:0032956">
    <property type="term" value="P:regulation of actin cytoskeleton organization"/>
    <property type="evidence" value="ECO:0000250"/>
    <property type="project" value="UniProtKB"/>
</dbReference>
<dbReference type="GO" id="GO:0043627">
    <property type="term" value="P:response to estrogen"/>
    <property type="evidence" value="ECO:0000314"/>
    <property type="project" value="UniProtKB"/>
</dbReference>
<dbReference type="GO" id="GO:0042594">
    <property type="term" value="P:response to starvation"/>
    <property type="evidence" value="ECO:0000318"/>
    <property type="project" value="GO_Central"/>
</dbReference>
<dbReference type="FunFam" id="2.130.10.10:FF:000422">
    <property type="entry name" value="BCAS3 microtubule-associated cell migration factor"/>
    <property type="match status" value="1"/>
</dbReference>
<dbReference type="Gene3D" id="2.130.10.10">
    <property type="entry name" value="YVTN repeat-like/Quinoprotein amine dehydrogenase"/>
    <property type="match status" value="1"/>
</dbReference>
<dbReference type="InterPro" id="IPR045142">
    <property type="entry name" value="BCAS3-like"/>
</dbReference>
<dbReference type="InterPro" id="IPR022175">
    <property type="entry name" value="BCAS3_dom"/>
</dbReference>
<dbReference type="InterPro" id="IPR048382">
    <property type="entry name" value="BCAS3_WD40"/>
</dbReference>
<dbReference type="InterPro" id="IPR015943">
    <property type="entry name" value="WD40/YVTN_repeat-like_dom_sf"/>
</dbReference>
<dbReference type="InterPro" id="IPR036322">
    <property type="entry name" value="WD40_repeat_dom_sf"/>
</dbReference>
<dbReference type="PANTHER" id="PTHR13268:SF0">
    <property type="entry name" value="BCAS3 MICROTUBULE ASSOCIATED CELL MIGRATION FACTOR"/>
    <property type="match status" value="1"/>
</dbReference>
<dbReference type="PANTHER" id="PTHR13268">
    <property type="entry name" value="BREAST CARCINOMA AMPLIFIED SEQUENCE 3"/>
    <property type="match status" value="1"/>
</dbReference>
<dbReference type="Pfam" id="PF12490">
    <property type="entry name" value="BCAS3"/>
    <property type="match status" value="1"/>
</dbReference>
<dbReference type="Pfam" id="PF21034">
    <property type="entry name" value="BCAS3_WD40"/>
    <property type="match status" value="1"/>
</dbReference>
<dbReference type="SUPFAM" id="SSF50978">
    <property type="entry name" value="WD40 repeat-like"/>
    <property type="match status" value="1"/>
</dbReference>
<gene>
    <name evidence="21 22" type="primary">BCAS3</name>
</gene>
<name>BCAS3_HUMAN</name>
<protein>
    <recommendedName>
        <fullName evidence="19">BCAS3 microtubule associated cell migration factor</fullName>
    </recommendedName>
    <alternativeName>
        <fullName evidence="21 22">Breast carcinoma-amplified sequence 3</fullName>
    </alternativeName>
    <alternativeName>
        <fullName>GAOB1</fullName>
    </alternativeName>
</protein>
<feature type="chain" id="PRO_0000050883" description="BCAS3 microtubule associated cell migration factor">
    <location>
        <begin position="1"/>
        <end position="928"/>
    </location>
</feature>
<feature type="repeat" description="WD" evidence="2">
    <location>
        <begin position="69"/>
        <end position="114"/>
    </location>
</feature>
<feature type="region of interest" description="Required for recruitment to preautophagosomal structure in response to mitophagy" evidence="11">
    <location>
        <begin position="254"/>
        <end position="312"/>
    </location>
</feature>
<feature type="region of interest" description="Required for recruitment to preautophagosomal structure in response to mitophagy" evidence="11">
    <location>
        <begin position="437"/>
        <end position="560"/>
    </location>
</feature>
<feature type="region of interest" description="Disordered" evidence="3">
    <location>
        <begin position="472"/>
        <end position="515"/>
    </location>
</feature>
<feature type="region of interest" description="Disordered" evidence="3">
    <location>
        <begin position="755"/>
        <end position="777"/>
    </location>
</feature>
<feature type="region of interest" description="Disordered" evidence="3">
    <location>
        <begin position="868"/>
        <end position="928"/>
    </location>
</feature>
<feature type="compositionally biased region" description="Low complexity" evidence="3">
    <location>
        <begin position="480"/>
        <end position="494"/>
    </location>
</feature>
<feature type="compositionally biased region" description="Low complexity" evidence="3">
    <location>
        <begin position="505"/>
        <end position="514"/>
    </location>
</feature>
<feature type="compositionally biased region" description="Low complexity" evidence="3">
    <location>
        <begin position="755"/>
        <end position="771"/>
    </location>
</feature>
<feature type="compositionally biased region" description="Low complexity" evidence="3">
    <location>
        <begin position="887"/>
        <end position="901"/>
    </location>
</feature>
<feature type="site" description="Breakpoint for translocation to form BCAS4-BCAS3">
    <location>
        <begin position="824"/>
        <end position="825"/>
    </location>
</feature>
<feature type="modified residue" description="N-acetylmethionine" evidence="25">
    <location>
        <position position="1"/>
    </location>
</feature>
<feature type="modified residue" description="Phosphoserine" evidence="1">
    <location>
        <position position="461"/>
    </location>
</feature>
<feature type="modified residue" description="Phosphoserine" evidence="23">
    <location>
        <position position="480"/>
    </location>
</feature>
<feature type="modified residue" description="Phosphoserine" evidence="1">
    <location>
        <position position="488"/>
    </location>
</feature>
<feature type="modified residue" description="Phosphoserine" evidence="1">
    <location>
        <position position="838"/>
    </location>
</feature>
<feature type="modified residue" description="Phosphoserine" evidence="24 26">
    <location>
        <position position="886"/>
    </location>
</feature>
<feature type="modified residue" description="Phosphoserine" evidence="1">
    <location>
        <position position="898"/>
    </location>
</feature>
<feature type="cross-link" description="Glycyl lysine isopeptide (Lys-Gly) (interchain with G-Cter in SUMO1); alternate" evidence="27">
    <location>
        <position position="215"/>
    </location>
</feature>
<feature type="cross-link" description="Glycyl lysine isopeptide (Lys-Gly) (interchain with G-Cter in SUMO2); alternate" evidence="27 28">
    <location>
        <position position="215"/>
    </location>
</feature>
<feature type="splice variant" id="VSP_040112" description="In isoform 6." evidence="15 18">
    <location>
        <begin position="1"/>
        <end position="229"/>
    </location>
</feature>
<feature type="splice variant" id="VSP_007858" description="In isoform 1, isoform 3, isoform 5 and isoform 6." evidence="14 15 16 18">
    <location>
        <begin position="547"/>
        <end position="561"/>
    </location>
</feature>
<feature type="splice variant" id="VSP_007860" description="In isoform 3 and isoform 4." evidence="15 17">
    <original>T</original>
    <variation>TDTALDVAVKTFPPERHVAVKCF</variation>
    <location>
        <position position="879"/>
    </location>
</feature>
<feature type="splice variant" id="VSP_040113" description="In isoform 5." evidence="15">
    <original>ELQREGSIETLSNSSGSTSGSIPRNFDGYRSPLPTNESQPLSLFPTGFP</original>
    <variation>DTALDVAVKTFPPERHVAVKCFGKKKGKKKQCQQPSVREQPNSNKACVRDGGRTSARGKHRDSE</variation>
    <location>
        <begin position="880"/>
        <end position="928"/>
    </location>
</feature>
<feature type="sequence variant" id="VAR_086504" description="In HEMARS." evidence="12">
    <location>
        <begin position="25"/>
        <end position="928"/>
    </location>
</feature>
<feature type="sequence variant" id="VAR_065093" description="In dbSNP:rs2643103." evidence="4 5 6 13">
    <original>N</original>
    <variation>S</variation>
    <location>
        <position position="87"/>
    </location>
</feature>
<feature type="sequence variant" id="VAR_057583" description="In dbSNP:rs34712615.">
    <original>I</original>
    <variation>V</variation>
    <location>
        <position position="106"/>
    </location>
</feature>
<feature type="sequence variant" id="VAR_086505" description="In HEMARS." evidence="12">
    <location>
        <begin position="113"/>
        <end position="928"/>
    </location>
</feature>
<feature type="sequence variant" id="VAR_086506" description="In HEMARS." evidence="12">
    <location>
        <begin position="192"/>
        <end position="928"/>
    </location>
</feature>
<feature type="sequence variant" id="VAR_086507" description="In HEMARS." evidence="12">
    <location>
        <begin position="242"/>
        <end position="928"/>
    </location>
</feature>
<feature type="sequence variant" id="VAR_086508" description="In HEMARS." evidence="12">
    <location>
        <begin position="486"/>
        <end position="928"/>
    </location>
</feature>
<feature type="sequence variant" id="VAR_086509" description="In HEMARS; no protein detected in patient cells that also carry R-577, suggesting the mutant is unstable; dbSNP:rs754857276." evidence="12">
    <original>P</original>
    <variation>L</variation>
    <location>
        <position position="567"/>
    </location>
</feature>
<feature type="sequence variant" id="VAR_086510" description="In HEMARS; no protein detected in patient cells that also carry L-567, suggesting the mutant is unstable; dbSNP:rs772813265." evidence="12">
    <original>G</original>
    <variation>R</variation>
    <location>
        <position position="577"/>
    </location>
</feature>
<feature type="sequence variant" id="VAR_086511" description="In HEMARS." evidence="12">
    <location>
        <begin position="743"/>
        <end position="928"/>
    </location>
</feature>
<feature type="mutagenesis site" description="No effect on recruitment to preautophagosomal structure in response to mitophagy. No effect on interaction with PHAF1." evidence="11">
    <original>H</original>
    <variation>A</variation>
    <location>
        <position position="350"/>
    </location>
</feature>
<feature type="mutagenesis site" description="Decreases recruitment to preautophagosomal structure in response to mitophagy. No effect on interaction with PHAF1." evidence="11">
    <original>D</original>
    <variation>A</variation>
    <location>
        <position position="370"/>
    </location>
</feature>
<feature type="mutagenesis site" description="No effect on recruitment to preautophagosomal structure in response to mitophagy. No effect on interaction with PHAF1." evidence="11">
    <original>L</original>
    <variation>A</variation>
    <location>
        <position position="372"/>
    </location>
</feature>
<feature type="mutagenesis site" description="No effect on recruitment to preautophagosomal structure in response to mitophagy. No effect on interaction with PHAF1." evidence="11">
    <original>H</original>
    <variation>A</variation>
    <location>
        <position position="377"/>
    </location>
</feature>
<feature type="mutagenesis site" description="Decreases recruitment to preautophagosomal structure in response to mitophagy. No effect on interaction with PHAF1." evidence="11">
    <original>H</original>
    <variation>A</variation>
    <location>
        <position position="400"/>
    </location>
</feature>
<feature type="mutagenesis site" description="Almost abolishes recruitment to preautophagosomal structure in response to mitophagy. No effect on interaction with PHAF1." evidence="11">
    <original>R</original>
    <variation>A</variation>
    <location>
        <position position="401"/>
    </location>
</feature>
<feature type="mutagenesis site" description="Decreases recruitment to preautophagosomal structure in response to mitophagy. No effect on interaction with PHAF1." evidence="11">
    <original>R</original>
    <variation>A</variation>
    <location>
        <position position="426"/>
    </location>
</feature>
<feature type="mutagenesis site" description="Almost abolishes recruitment to preautophagosomal structure in response to mitophagy. No effect on interaction with PHAF1." evidence="11">
    <original>T</original>
    <variation>A</variation>
    <location>
        <position position="428"/>
    </location>
</feature>
<feature type="mutagenesis site" description="Almost abolishes recruitment to preautophagosomal structure in response to mitophagy. No effect on interaction with PHAF1." evidence="11">
    <original>H</original>
    <variation>A</variation>
    <location>
        <position position="430"/>
    </location>
</feature>
<feature type="sequence conflict" description="In Ref. 1; AAL99632." evidence="19" ref="1">
    <original>E</original>
    <variation>K</variation>
    <location>
        <position position="29"/>
    </location>
</feature>
<feature type="sequence conflict" description="In Ref. 1; AAL99632." evidence="19" ref="1">
    <original>R</original>
    <variation>K</variation>
    <location>
        <position position="127"/>
    </location>
</feature>
<feature type="sequence conflict" description="In Ref. 2; BAB15156." evidence="19" ref="2">
    <original>VV</original>
    <variation>II</variation>
    <location>
        <begin position="199"/>
        <end position="200"/>
    </location>
</feature>
<feature type="sequence conflict" description="In Ref. 2; BAB14078/BAB14380." evidence="19" ref="2">
    <original>K</original>
    <variation>E</variation>
    <location>
        <position position="533"/>
    </location>
</feature>
<feature type="sequence conflict" description="In Ref. 2; BAB15156." evidence="19" ref="2">
    <original>D</original>
    <variation>G</variation>
    <location>
        <position position="640"/>
    </location>
</feature>
<feature type="sequence conflict" description="In Ref. 2; BAB14078." evidence="19" ref="2">
    <original>Q</original>
    <variation>R</variation>
    <location>
        <position position="666"/>
    </location>
</feature>
<feature type="sequence conflict" description="In Ref. 2; BAB15156." evidence="19" ref="2">
    <original>S</original>
    <variation>P</variation>
    <location>
        <position position="806"/>
    </location>
</feature>
<feature type="sequence conflict" description="In Ref. 4; CAD54076." evidence="19" ref="4">
    <original>G</original>
    <variation>R</variation>
    <location sequence="Q9H6U6-7">
        <position position="891"/>
    </location>
</feature>
<reference key="1">
    <citation type="journal article" date="2002" name="Genes Chromosomes Cancer">
        <title>Cloning of BCAS3 (17q23) and BCAS4 (20q13) genes that undergo amplification, overexpression, and fusion in breast cancer.</title>
        <authorList>
            <person name="Baerlund M."/>
            <person name="Monni O."/>
            <person name="Weaver J.D."/>
            <person name="Kauraniemi P."/>
            <person name="Sauter G."/>
            <person name="Heiskanen M."/>
            <person name="Kallioniemi O.-P."/>
            <person name="Kallioniemi A."/>
        </authorList>
    </citation>
    <scope>NUCLEOTIDE SEQUENCE [MRNA] (ISOFORM 1)</scope>
    <scope>TISSUE SPECIFICITY</scope>
    <scope>CHROMOSOMAL TRANSLOCATION WITH BCAS4</scope>
    <scope>VARIANT SER-87</scope>
    <source>
        <tissue>Liver</tissue>
    </source>
</reference>
<reference key="2">
    <citation type="journal article" date="2004" name="Nat. Genet.">
        <title>Complete sequencing and characterization of 21,243 full-length human cDNAs.</title>
        <authorList>
            <person name="Ota T."/>
            <person name="Suzuki Y."/>
            <person name="Nishikawa T."/>
            <person name="Otsuki T."/>
            <person name="Sugiyama T."/>
            <person name="Irie R."/>
            <person name="Wakamatsu A."/>
            <person name="Hayashi K."/>
            <person name="Sato H."/>
            <person name="Nagai K."/>
            <person name="Kimura K."/>
            <person name="Makita H."/>
            <person name="Sekine M."/>
            <person name="Obayashi M."/>
            <person name="Nishi T."/>
            <person name="Shibahara T."/>
            <person name="Tanaka T."/>
            <person name="Ishii S."/>
            <person name="Yamamoto J."/>
            <person name="Saito K."/>
            <person name="Kawai Y."/>
            <person name="Isono Y."/>
            <person name="Nakamura Y."/>
            <person name="Nagahari K."/>
            <person name="Murakami K."/>
            <person name="Yasuda T."/>
            <person name="Iwayanagi T."/>
            <person name="Wagatsuma M."/>
            <person name="Shiratori A."/>
            <person name="Sudo H."/>
            <person name="Hosoiri T."/>
            <person name="Kaku Y."/>
            <person name="Kodaira H."/>
            <person name="Kondo H."/>
            <person name="Sugawara M."/>
            <person name="Takahashi M."/>
            <person name="Kanda K."/>
            <person name="Yokoi T."/>
            <person name="Furuya T."/>
            <person name="Kikkawa E."/>
            <person name="Omura Y."/>
            <person name="Abe K."/>
            <person name="Kamihara K."/>
            <person name="Katsuta N."/>
            <person name="Sato K."/>
            <person name="Tanikawa M."/>
            <person name="Yamazaki M."/>
            <person name="Ninomiya K."/>
            <person name="Ishibashi T."/>
            <person name="Yamashita H."/>
            <person name="Murakawa K."/>
            <person name="Fujimori K."/>
            <person name="Tanai H."/>
            <person name="Kimata M."/>
            <person name="Watanabe M."/>
            <person name="Hiraoka S."/>
            <person name="Chiba Y."/>
            <person name="Ishida S."/>
            <person name="Ono Y."/>
            <person name="Takiguchi S."/>
            <person name="Watanabe S."/>
            <person name="Yosida M."/>
            <person name="Hotuta T."/>
            <person name="Kusano J."/>
            <person name="Kanehori K."/>
            <person name="Takahashi-Fujii A."/>
            <person name="Hara H."/>
            <person name="Tanase T.-O."/>
            <person name="Nomura Y."/>
            <person name="Togiya S."/>
            <person name="Komai F."/>
            <person name="Hara R."/>
            <person name="Takeuchi K."/>
            <person name="Arita M."/>
            <person name="Imose N."/>
            <person name="Musashino K."/>
            <person name="Yuuki H."/>
            <person name="Oshima A."/>
            <person name="Sasaki N."/>
            <person name="Aotsuka S."/>
            <person name="Yoshikawa Y."/>
            <person name="Matsunawa H."/>
            <person name="Ichihara T."/>
            <person name="Shiohata N."/>
            <person name="Sano S."/>
            <person name="Moriya S."/>
            <person name="Momiyama H."/>
            <person name="Satoh N."/>
            <person name="Takami S."/>
            <person name="Terashima Y."/>
            <person name="Suzuki O."/>
            <person name="Nakagawa S."/>
            <person name="Senoh A."/>
            <person name="Mizoguchi H."/>
            <person name="Goto Y."/>
            <person name="Shimizu F."/>
            <person name="Wakebe H."/>
            <person name="Hishigaki H."/>
            <person name="Watanabe T."/>
            <person name="Sugiyama A."/>
            <person name="Takemoto M."/>
            <person name="Kawakami B."/>
            <person name="Yamazaki M."/>
            <person name="Watanabe K."/>
            <person name="Kumagai A."/>
            <person name="Itakura S."/>
            <person name="Fukuzumi Y."/>
            <person name="Fujimori Y."/>
            <person name="Komiyama M."/>
            <person name="Tashiro H."/>
            <person name="Tanigami A."/>
            <person name="Fujiwara T."/>
            <person name="Ono T."/>
            <person name="Yamada K."/>
            <person name="Fujii Y."/>
            <person name="Ozaki K."/>
            <person name="Hirao M."/>
            <person name="Ohmori Y."/>
            <person name="Kawabata A."/>
            <person name="Hikiji T."/>
            <person name="Kobatake N."/>
            <person name="Inagaki H."/>
            <person name="Ikema Y."/>
            <person name="Okamoto S."/>
            <person name="Okitani R."/>
            <person name="Kawakami T."/>
            <person name="Noguchi S."/>
            <person name="Itoh T."/>
            <person name="Shigeta K."/>
            <person name="Senba T."/>
            <person name="Matsumura K."/>
            <person name="Nakajima Y."/>
            <person name="Mizuno T."/>
            <person name="Morinaga M."/>
            <person name="Sasaki M."/>
            <person name="Togashi T."/>
            <person name="Oyama M."/>
            <person name="Hata H."/>
            <person name="Watanabe M."/>
            <person name="Komatsu T."/>
            <person name="Mizushima-Sugano J."/>
            <person name="Satoh T."/>
            <person name="Shirai Y."/>
            <person name="Takahashi Y."/>
            <person name="Nakagawa K."/>
            <person name="Okumura K."/>
            <person name="Nagase T."/>
            <person name="Nomura N."/>
            <person name="Kikuchi H."/>
            <person name="Masuho Y."/>
            <person name="Yamashita R."/>
            <person name="Nakai K."/>
            <person name="Yada T."/>
            <person name="Nakamura Y."/>
            <person name="Ohara O."/>
            <person name="Isogai T."/>
            <person name="Sugano S."/>
        </authorList>
    </citation>
    <scope>NUCLEOTIDE SEQUENCE [LARGE SCALE MRNA] (ISOFORMS 1; 5 AND 6)</scope>
    <scope>NUCLEOTIDE SEQUENCE [LARGE SCALE MRNA] OF 478-928 (ISOFORM 3)</scope>
    <scope>VARIANT SER-87</scope>
    <source>
        <tissue>Colon</tissue>
    </source>
</reference>
<reference key="3">
    <citation type="journal article" date="2006" name="Nature">
        <title>DNA sequence of human chromosome 17 and analysis of rearrangement in the human lineage.</title>
        <authorList>
            <person name="Zody M.C."/>
            <person name="Garber M."/>
            <person name="Adams D.J."/>
            <person name="Sharpe T."/>
            <person name="Harrow J."/>
            <person name="Lupski J.R."/>
            <person name="Nicholson C."/>
            <person name="Searle S.M."/>
            <person name="Wilming L."/>
            <person name="Young S.K."/>
            <person name="Abouelleil A."/>
            <person name="Allen N.R."/>
            <person name="Bi W."/>
            <person name="Bloom T."/>
            <person name="Borowsky M.L."/>
            <person name="Bugalter B.E."/>
            <person name="Butler J."/>
            <person name="Chang J.L."/>
            <person name="Chen C.-K."/>
            <person name="Cook A."/>
            <person name="Corum B."/>
            <person name="Cuomo C.A."/>
            <person name="de Jong P.J."/>
            <person name="DeCaprio D."/>
            <person name="Dewar K."/>
            <person name="FitzGerald M."/>
            <person name="Gilbert J."/>
            <person name="Gibson R."/>
            <person name="Gnerre S."/>
            <person name="Goldstein S."/>
            <person name="Grafham D.V."/>
            <person name="Grocock R."/>
            <person name="Hafez N."/>
            <person name="Hagopian D.S."/>
            <person name="Hart E."/>
            <person name="Norman C.H."/>
            <person name="Humphray S."/>
            <person name="Jaffe D.B."/>
            <person name="Jones M."/>
            <person name="Kamal M."/>
            <person name="Khodiyar V.K."/>
            <person name="LaButti K."/>
            <person name="Laird G."/>
            <person name="Lehoczky J."/>
            <person name="Liu X."/>
            <person name="Lokyitsang T."/>
            <person name="Loveland J."/>
            <person name="Lui A."/>
            <person name="Macdonald P."/>
            <person name="Major J.E."/>
            <person name="Matthews L."/>
            <person name="Mauceli E."/>
            <person name="McCarroll S.A."/>
            <person name="Mihalev A.H."/>
            <person name="Mudge J."/>
            <person name="Nguyen C."/>
            <person name="Nicol R."/>
            <person name="O'Leary S.B."/>
            <person name="Osoegawa K."/>
            <person name="Schwartz D.C."/>
            <person name="Shaw-Smith C."/>
            <person name="Stankiewicz P."/>
            <person name="Steward C."/>
            <person name="Swarbreck D."/>
            <person name="Venkataraman V."/>
            <person name="Whittaker C.A."/>
            <person name="Yang X."/>
            <person name="Zimmer A.R."/>
            <person name="Bradley A."/>
            <person name="Hubbard T."/>
            <person name="Birren B.W."/>
            <person name="Rogers J."/>
            <person name="Lander E.S."/>
            <person name="Nusbaum C."/>
        </authorList>
    </citation>
    <scope>NUCLEOTIDE SEQUENCE [LARGE SCALE GENOMIC DNA]</scope>
</reference>
<reference key="4">
    <citation type="submission" date="2005-09" db="EMBL/GenBank/DDBJ databases">
        <authorList>
            <person name="Mural R.J."/>
            <person name="Istrail S."/>
            <person name="Sutton G.G."/>
            <person name="Florea L."/>
            <person name="Halpern A.L."/>
            <person name="Mobarry C.M."/>
            <person name="Lippert R."/>
            <person name="Walenz B."/>
            <person name="Shatkay H."/>
            <person name="Dew I."/>
            <person name="Miller J.R."/>
            <person name="Flanigan M.J."/>
            <person name="Edwards N.J."/>
            <person name="Bolanos R."/>
            <person name="Fasulo D."/>
            <person name="Halldorsson B.V."/>
            <person name="Hannenhalli S."/>
            <person name="Turner R."/>
            <person name="Yooseph S."/>
            <person name="Lu F."/>
            <person name="Nusskern D.R."/>
            <person name="Shue B.C."/>
            <person name="Zheng X.H."/>
            <person name="Zhong F."/>
            <person name="Delcher A.L."/>
            <person name="Huson D.H."/>
            <person name="Kravitz S.A."/>
            <person name="Mouchard L."/>
            <person name="Reinert K."/>
            <person name="Remington K.A."/>
            <person name="Clark A.G."/>
            <person name="Waterman M.S."/>
            <person name="Eichler E.E."/>
            <person name="Adams M.D."/>
            <person name="Hunkapiller M.W."/>
            <person name="Myers E.W."/>
            <person name="Venter J.C."/>
        </authorList>
    </citation>
    <scope>NUCLEOTIDE SEQUENCE [LARGE SCALE GENOMIC DNA]</scope>
    <scope>VARIANT SER-87</scope>
</reference>
<reference key="5">
    <citation type="journal article" date="2004" name="Genome Res.">
        <title>The status, quality, and expansion of the NIH full-length cDNA project: the Mammalian Gene Collection (MGC).</title>
        <authorList>
            <consortium name="The MGC Project Team"/>
        </authorList>
    </citation>
    <scope>NUCLEOTIDE SEQUENCE [LARGE SCALE MRNA] (ISOFORM 1)</scope>
    <scope>VARIANT SER-87</scope>
    <source>
        <tissue>Brain</tissue>
        <tissue>Cervix</tissue>
    </source>
</reference>
<reference key="6">
    <citation type="submission" date="2002-11" db="EMBL/GenBank/DDBJ databases">
        <title>Cloning and sequencing of a new isoform similar to FLJ20128 and BCAS3.</title>
        <authorList>
            <person name="Bauer M."/>
        </authorList>
    </citation>
    <scope>NUCLEOTIDE SEQUENCE [MRNA] OF 1-433 (ISOFORM 6)</scope>
    <scope>PARTIAL NUCLEOTIDE SEQUENCE [MRNA] (ISOFORM 5)</scope>
</reference>
<reference key="7">
    <citation type="journal article" date="2007" name="BMC Genomics">
        <title>The full-ORF clone resource of the German cDNA consortium.</title>
        <authorList>
            <person name="Bechtel S."/>
            <person name="Rosenfelder H."/>
            <person name="Duda A."/>
            <person name="Schmidt C.P."/>
            <person name="Ernst U."/>
            <person name="Wellenreuther R."/>
            <person name="Mehrle A."/>
            <person name="Schuster C."/>
            <person name="Bahr A."/>
            <person name="Bloecker H."/>
            <person name="Heubner D."/>
            <person name="Hoerlein A."/>
            <person name="Michel G."/>
            <person name="Wedler H."/>
            <person name="Koehrer K."/>
            <person name="Ottenwaelder B."/>
            <person name="Poustka A."/>
            <person name="Wiemann S."/>
            <person name="Schupp I."/>
        </authorList>
    </citation>
    <scope>NUCLEOTIDE SEQUENCE [LARGE SCALE MRNA] OF 475-928 (ISOFORM 4)</scope>
    <source>
        <tissue>Brain</tissue>
    </source>
</reference>
<reference key="8">
    <citation type="submission" date="2000-04" db="EMBL/GenBank/DDBJ databases">
        <title>Five novel genes from 17q23 amplicon have different amplification and overexpression frequency in breast cancer.</title>
        <authorList>
            <person name="Wu G."/>
            <person name="Couch F.J."/>
        </authorList>
    </citation>
    <scope>NUCLEOTIDE SEQUENCE [MRNA] OF 510-928 (ISOFORMS 1/6)</scope>
</reference>
<reference key="9">
    <citation type="journal article" date="2006" name="Gene Expr. Patterns">
        <title>Rudhira is a cytoplasmic WD40 protein expressed in mouse embryonic stem cells and during embryonic erythropoiesis.</title>
        <authorList>
            <person name="Siva K."/>
            <person name="Inamdar M.S."/>
        </authorList>
    </citation>
    <scope>DOMAIN</scope>
</reference>
<reference key="10">
    <citation type="journal article" date="2006" name="Proc. Natl. Acad. Sci. U.S.A.">
        <title>MTA1, a transcriptional activator of breast cancer amplified sequence 3.</title>
        <authorList>
            <person name="Gururaj A.E."/>
            <person name="Singh R.R."/>
            <person name="Rayala S.K."/>
            <person name="Holm C."/>
            <person name="den Hollander P."/>
            <person name="Zhang H."/>
            <person name="Balasenthil S."/>
            <person name="Talukder A.H."/>
            <person name="Landberg G."/>
            <person name="Kumar R."/>
        </authorList>
    </citation>
    <scope>SUBCELLULAR LOCATION</scope>
    <scope>TISSUE SPECIFICITY</scope>
    <scope>INDUCTION</scope>
</reference>
<reference key="11">
    <citation type="journal article" date="2013" name="Proc. Natl. Acad. Sci. U.S.A.">
        <authorList>
            <person name="Gururaj A.E."/>
            <person name="Singh R.R."/>
            <person name="Rayala S.K."/>
            <person name="Holm C."/>
            <person name="den Hollander P."/>
            <person name="Zhang H."/>
            <person name="Balasenthil S."/>
            <person name="Talukder A.H."/>
            <person name="Landberg G."/>
            <person name="Kumar R."/>
        </authorList>
    </citation>
    <scope>ERRATUM OF PUBMED:16617102</scope>
</reference>
<reference key="12">
    <citation type="journal article" date="2007" name="Mol. Endocrinol.">
        <title>Estrogen induces expression of BCAS3, a novel estrogen receptor-alpha coactivator, through proline-, glutamic acid-, and leucine-rich protein-1 (PELP1).</title>
        <authorList>
            <person name="Gururaj A.E."/>
            <person name="Peng S."/>
            <person name="Vadlamudi R.K."/>
            <person name="Kumar R."/>
        </authorList>
    </citation>
    <scope>FUNCTION</scope>
    <scope>INTERACTION WITH HISTONE H3; ESR1; KAT2B AND PELP1</scope>
    <scope>SUBCELLULAR LOCATION</scope>
    <scope>CHROMATIN-BINDING</scope>
</reference>
<reference key="13">
    <citation type="journal article" date="2007" name="PLoS ONE">
        <title>Human BCAS3 expression in embryonic stem cells and vascular precursors suggests a role in human embryogenesis and tumor angiogenesis.</title>
        <authorList>
            <person name="Siva K."/>
            <person name="Venu P."/>
            <person name="Mahadevan A."/>
            <person name="Shankar S.K."/>
            <person name="Inamdar M.S."/>
        </authorList>
    </citation>
    <scope>SUBCELLULAR LOCATION</scope>
    <scope>TISSUE SPECIFICITY</scope>
</reference>
<reference key="14">
    <citation type="journal article" date="2008" name="Proc. Natl. Acad. Sci. U.S.A.">
        <title>A quantitative atlas of mitotic phosphorylation.</title>
        <authorList>
            <person name="Dephoure N."/>
            <person name="Zhou C."/>
            <person name="Villen J."/>
            <person name="Beausoleil S.A."/>
            <person name="Bakalarski C.E."/>
            <person name="Elledge S.J."/>
            <person name="Gygi S.P."/>
        </authorList>
    </citation>
    <scope>PHOSPHORYLATION [LARGE SCALE ANALYSIS] AT SER-480</scope>
    <scope>IDENTIFICATION BY MASS SPECTROMETRY [LARGE SCALE ANALYSIS]</scope>
    <source>
        <tissue>Cervix carcinoma</tissue>
    </source>
</reference>
<reference key="15">
    <citation type="journal article" date="2009" name="Sci. Signal.">
        <title>Quantitative phosphoproteomic analysis of T cell receptor signaling reveals system-wide modulation of protein-protein interactions.</title>
        <authorList>
            <person name="Mayya V."/>
            <person name="Lundgren D.H."/>
            <person name="Hwang S.-I."/>
            <person name="Rezaul K."/>
            <person name="Wu L."/>
            <person name="Eng J.K."/>
            <person name="Rodionov V."/>
            <person name="Han D.K."/>
        </authorList>
    </citation>
    <scope>PHOSPHORYLATION [LARGE SCALE ANALYSIS] AT SER-886</scope>
    <scope>IDENTIFICATION BY MASS SPECTROMETRY [LARGE SCALE ANALYSIS]</scope>
    <source>
        <tissue>Leukemic T-cell</tissue>
    </source>
</reference>
<reference key="16">
    <citation type="journal article" date="2011" name="BMC Syst. Biol.">
        <title>Initial characterization of the human central proteome.</title>
        <authorList>
            <person name="Burkard T.R."/>
            <person name="Planyavsky M."/>
            <person name="Kaupe I."/>
            <person name="Breitwieser F.P."/>
            <person name="Buerckstuemmer T."/>
            <person name="Bennett K.L."/>
            <person name="Superti-Furga G."/>
            <person name="Colinge J."/>
        </authorList>
    </citation>
    <scope>IDENTIFICATION BY MASS SPECTROMETRY [LARGE SCALE ANALYSIS]</scope>
</reference>
<reference key="17">
    <citation type="journal article" date="2012" name="Exp. Cell Res.">
        <title>Rudhira/BCAS3 is a cytoskeletal protein that controls Cdc42 activation and directional cell migration during angiogenesis.</title>
        <authorList>
            <person name="Jain M."/>
            <person name="Bhat G.P."/>
            <person name="Vijayra havan K."/>
            <person name="Inamdar M.S."/>
        </authorList>
    </citation>
    <scope>INTERACTION WITH BETA-TUBULIN AND VIM</scope>
</reference>
<reference key="18">
    <citation type="journal article" date="2012" name="Proc. Natl. Acad. Sci. U.S.A.">
        <title>N-terminal acetylome analyses and functional insights of the N-terminal acetyltransferase NatB.</title>
        <authorList>
            <person name="Van Damme P."/>
            <person name="Lasa M."/>
            <person name="Polevoda B."/>
            <person name="Gazquez C."/>
            <person name="Elosegui-Artola A."/>
            <person name="Kim D.S."/>
            <person name="De Juan-Pardo E."/>
            <person name="Demeyer K."/>
            <person name="Hole K."/>
            <person name="Larrea E."/>
            <person name="Timmerman E."/>
            <person name="Prieto J."/>
            <person name="Arnesen T."/>
            <person name="Sherman F."/>
            <person name="Gevaert K."/>
            <person name="Aldabe R."/>
        </authorList>
    </citation>
    <scope>ACETYLATION [LARGE SCALE ANALYSIS] AT MET-1</scope>
    <scope>IDENTIFICATION BY MASS SPECTROMETRY [LARGE SCALE ANALYSIS]</scope>
</reference>
<reference key="19">
    <citation type="journal article" date="2013" name="J. Proteome Res.">
        <title>Toward a comprehensive characterization of a human cancer cell phosphoproteome.</title>
        <authorList>
            <person name="Zhou H."/>
            <person name="Di Palma S."/>
            <person name="Preisinger C."/>
            <person name="Peng M."/>
            <person name="Polat A.N."/>
            <person name="Heck A.J."/>
            <person name="Mohammed S."/>
        </authorList>
    </citation>
    <scope>PHOSPHORYLATION [LARGE SCALE ANALYSIS] AT SER-886</scope>
    <scope>IDENTIFICATION BY MASS SPECTROMETRY [LARGE SCALE ANALYSIS]</scope>
    <source>
        <tissue>Cervix carcinoma</tissue>
        <tissue>Erythroleukemia</tissue>
    </source>
</reference>
<reference key="20">
    <citation type="journal article" date="2014" name="J. Proteomics">
        <title>An enzyme assisted RP-RPLC approach for in-depth analysis of human liver phosphoproteome.</title>
        <authorList>
            <person name="Bian Y."/>
            <person name="Song C."/>
            <person name="Cheng K."/>
            <person name="Dong M."/>
            <person name="Wang F."/>
            <person name="Huang J."/>
            <person name="Sun D."/>
            <person name="Wang L."/>
            <person name="Ye M."/>
            <person name="Zou H."/>
        </authorList>
    </citation>
    <scope>IDENTIFICATION BY MASS SPECTROMETRY [LARGE SCALE ANALYSIS]</scope>
    <source>
        <tissue>Liver</tissue>
    </source>
</reference>
<reference key="21">
    <citation type="journal article" date="2014" name="Proc. Natl. Acad. Sci. U.S.A.">
        <title>Mapping of SUMO sites and analysis of SUMOylation changes induced by external stimuli.</title>
        <authorList>
            <person name="Impens F."/>
            <person name="Radoshevich L."/>
            <person name="Cossart P."/>
            <person name="Ribet D."/>
        </authorList>
    </citation>
    <scope>SUMOYLATION [LARGE SCALE ANALYSIS] AT LYS-215</scope>
    <scope>IDENTIFICATION BY MASS SPECTROMETRY [LARGE SCALE ANALYSIS]</scope>
</reference>
<reference key="22">
    <citation type="journal article" date="2017" name="Nat. Struct. Mol. Biol.">
        <title>Site-specific mapping of the human SUMO proteome reveals co-modification with phosphorylation.</title>
        <authorList>
            <person name="Hendriks I.A."/>
            <person name="Lyon D."/>
            <person name="Young C."/>
            <person name="Jensen L.J."/>
            <person name="Vertegaal A.C."/>
            <person name="Nielsen M.L."/>
        </authorList>
    </citation>
    <scope>SUMOYLATION [LARGE SCALE ANALYSIS] AT LYS-215</scope>
    <scope>IDENTIFICATION BY MASS SPECTROMETRY [LARGE SCALE ANALYSIS]</scope>
</reference>
<reference key="23">
    <citation type="journal article" date="2021" name="Autophagy">
        <title>Mammalian BCAS3 and C16orf70 associate with the phagophore assembly site in response to selective and non-selective autophagy.</title>
        <authorList>
            <person name="Kojima W."/>
            <person name="Yamano K."/>
            <person name="Kosako H."/>
            <person name="Imai K."/>
            <person name="Kikuchi R."/>
            <person name="Tanaka K."/>
            <person name="Matsuda N."/>
        </authorList>
    </citation>
    <scope>FUNCTION</scope>
    <scope>INTERACTION WITH PHAF1</scope>
    <scope>SUBCELLULAR LOCATION</scope>
    <scope>MUTAGENESIS OF HIS-350; ASP-370; LEU-372; HIS-377; HIS-400; ARG-401; ARG-426; THR-428 AND HIS-430</scope>
    <scope>PHOSPHOINOSITIDES-BINDING</scope>
</reference>
<reference key="24">
    <citation type="journal article" date="2021" name="Am. J. Hum. Genet.">
        <title>Bi-allelic loss-of-function variants in BCAS3 cause a syndromic neurodevelopmental disorder.</title>
        <authorList>
            <consortium name="Care4Rare Canada Consortium"/>
            <consortium name="Genomics England Research Consortium"/>
            <person name="Hengel H."/>
            <person name="Hannan S.B."/>
            <person name="Dyack S."/>
            <person name="MacKay S.B."/>
            <person name="Schatz U."/>
            <person name="Fleger M."/>
            <person name="Kurringer A."/>
            <person name="Balousha G."/>
            <person name="Ghanim Z."/>
            <person name="Alkuraya F.S."/>
            <person name="Alzaidan H."/>
            <person name="Alsaif H.S."/>
            <person name="Mitani T."/>
            <person name="Bozdogan S."/>
            <person name="Pehlivan D."/>
            <person name="Lupski J.R."/>
            <person name="Gleeson J.J."/>
            <person name="Dehghani M."/>
            <person name="Mehrjardi M.Y.V."/>
            <person name="Sherr E.H."/>
            <person name="Parks K.C."/>
            <person name="Argilli E."/>
            <person name="Begtrup A."/>
            <person name="Galehdari H."/>
            <person name="Balousha O."/>
            <person name="Shariati G."/>
            <person name="Mazaheri N."/>
            <person name="Malamiri R.A."/>
            <person name="Pagnamenta A.T."/>
            <person name="Kingston H."/>
            <person name="Banka S."/>
            <person name="Jackson A."/>
            <person name="Osmond M."/>
            <person name="Riess A."/>
            <person name="Haack T.B."/>
            <person name="Naegele T."/>
            <person name="Schuster S."/>
            <person name="Hauser S."/>
            <person name="Admard J."/>
            <person name="Casadei N."/>
            <person name="Velic A."/>
            <person name="Macek B."/>
            <person name="Ossowski S."/>
            <person name="Houlden H."/>
            <person name="Maroofian R."/>
            <person name="Schoels L."/>
        </authorList>
    </citation>
    <scope>VARIANTS HEMARS 25-GLN--PRO-928 DEL; 113-GLN--PRO-928 DEL; 192-CYS--PRO-928 DEL; 242-TYR--PRO-928 DEL; 486-SER--PRO-928 DEL; LEU-567; ARG-577 AND 743-GLN--PRO-928 DEL</scope>
    <scope>CHARACTERIZATION OF VARIANTS HEMARS LEU-567 AND ARG-577</scope>
    <scope>INVOLVEMENT IN HEMARS</scope>
</reference>
<evidence type="ECO:0000250" key="1">
    <source>
        <dbReference type="UniProtKB" id="Q8CCN5"/>
    </source>
</evidence>
<evidence type="ECO:0000255" key="2"/>
<evidence type="ECO:0000256" key="3">
    <source>
        <dbReference type="SAM" id="MobiDB-lite"/>
    </source>
</evidence>
<evidence type="ECO:0000269" key="4">
    <source>
    </source>
</evidence>
<evidence type="ECO:0000269" key="5">
    <source>
    </source>
</evidence>
<evidence type="ECO:0000269" key="6">
    <source>
    </source>
</evidence>
<evidence type="ECO:0000269" key="7">
    <source>
    </source>
</evidence>
<evidence type="ECO:0000269" key="8">
    <source>
    </source>
</evidence>
<evidence type="ECO:0000269" key="9">
    <source>
    </source>
</evidence>
<evidence type="ECO:0000269" key="10">
    <source>
    </source>
</evidence>
<evidence type="ECO:0000269" key="11">
    <source>
    </source>
</evidence>
<evidence type="ECO:0000269" key="12">
    <source>
    </source>
</evidence>
<evidence type="ECO:0000269" key="13">
    <source ref="4"/>
</evidence>
<evidence type="ECO:0000303" key="14">
    <source>
    </source>
</evidence>
<evidence type="ECO:0000303" key="15">
    <source>
    </source>
</evidence>
<evidence type="ECO:0000303" key="16">
    <source>
    </source>
</evidence>
<evidence type="ECO:0000303" key="17">
    <source>
    </source>
</evidence>
<evidence type="ECO:0000303" key="18">
    <source ref="6"/>
</evidence>
<evidence type="ECO:0000305" key="19"/>
<evidence type="ECO:0000305" key="20">
    <source>
    </source>
</evidence>
<evidence type="ECO:0000312" key="21">
    <source>
        <dbReference type="HGNC" id="HGNC:14347"/>
    </source>
</evidence>
<evidence type="ECO:0000312" key="22">
    <source>
        <dbReference type="MIM" id="607470"/>
    </source>
</evidence>
<evidence type="ECO:0007744" key="23">
    <source>
    </source>
</evidence>
<evidence type="ECO:0007744" key="24">
    <source>
    </source>
</evidence>
<evidence type="ECO:0007744" key="25">
    <source>
    </source>
</evidence>
<evidence type="ECO:0007744" key="26">
    <source>
    </source>
</evidence>
<evidence type="ECO:0007744" key="27">
    <source>
    </source>
</evidence>
<evidence type="ECO:0007744" key="28">
    <source>
    </source>
</evidence>
<sequence>MNEAMATDSPRRPSRCTGGVVVRPQAVTEQSYMESVVTFLQDVVPQAYSGTPLTEEKEKIVWVRFENADLNDTSRNLEFHEIHSTGNEPPLLIMIGYSDGMQVWSIPISGEAQELFSVRHGPIRAARILPAPQFGAQKCDNFAEKRPLLGVCKSIGSSGTSPPYCCVDLYSLRTGEMVKSIQFKTPIYDLHCNKRILVVVLQEKIAAFDSCTFTKKFFVTSCYPCPGPNMNPIALGSRWLAYAENKLIRCHQSRGGACGDNIQSYTATVISAAKTLKSGLTMVGKVVTQLTGTLPSGVTEDDVAIHSNSRRSPLVPGIITVIDTETVGEGQVLVSEDSDSDGIVAHFPAHEKPVCCMAFNTSGMLLVTTDTLGHDFHVFQILTHPWSSSQCAVHHLYTLHRGETEAKVQDICFSHDCRWVVVSTLRGTSHVFPINPYGGQPCVRTHMSPRVVNRMSRFQKSAGLEEIEQELTSKQGGRCSPVPGLSSSPSGSPLHGKLNSQDSYNNFTNNNPGNPRLSPLPSLMVVMPLAQIKQPMTLGTITKRTGPYLFGAGCFSIKAPCKVKPPPQISPSKSMGGEFCVAAIFGTSRSWFANNAGLKREKDQSKQVVVESLYIISCYGTLVEHMMEPRPLSTAPKISDDTPLEMMTSPRASWTLVRTPQWNELQPPFNANHPLLLAADAVQYYQFLLAGLVPPGSPGPITRHGSYDSLASDHSGQEDEEWLSQVEIVTHTGPHRRLWMGPQFQFKTIHPSGQTTVISSSSSVLQSHGPSDTPQPLLDFDTDDLDLNSLRIQPVRSDPVSMPGSSRPVSDRRGVSTVIDAASGTFDRSVTLLEVCGSWPEGFGLRHMSSMEHTEEGLRERLADAMAESPSRDVVGSGTELQREGSIETLSNSSGSTSGSIPRNFDGYRSPLPTNESQPLSLFPTGFP</sequence>
<accession>Q9H6U6</accession>
<accession>Q17RM0</accession>
<accession>Q6KF21</accession>
<accession>Q8IXI6</accession>
<accession>Q8NDR8</accession>
<accession>Q8TDL9</accession>
<accession>Q8TDM1</accession>
<accession>Q8WY55</accession>
<accession>Q9BVF0</accession>
<accession>Q9H957</accession>
<accession>Q9H9Y9</accession>
<accession>Q9NXP4</accession>
<proteinExistence type="evidence at protein level"/>
<comment type="function">
    <text evidence="1 8 11">Plays a role in angiogenesis. Participates in the regulation of cell polarity and directional endothelial cell migration by mediating both the activation and recruitment of CDC42 and the reorganization of the actin cytoskeleton at the cell leading edge. Promotes filipodia formation (By similarity). Functions synergistically with PELP1 as a transcriptional coactivator of estrogen receptor-responsive genes. Stimulates histone acetyltransferase activity. Binds to chromatin. Plays a regulatory role in autophagic activity. In complex with PHAF1, associates with the preautophagosomal structure during both non-selective and selective autophagy (PubMed:33499712). Probably binds phosphatidylinositol 3-phosphate (PtdIns3P) which would mediate the recruitment preautophagosomal structures (PubMed:33499712).</text>
</comment>
<comment type="subunit">
    <text evidence="8 10 11">Interacts with histone H3, ESR1, KAT2B and PELP1; the interactions occur in a estrogen-dependent manner. Interacts with beta-tubulin and VIM. Interacts (via C-terminal) with PHAF1; the interaction is requrired for the association with the phagophore (PubMed:33499712).</text>
</comment>
<comment type="interaction">
    <interactant intactId="EBI-6083685">
        <id>Q9H6U6</id>
    </interactant>
    <interactant intactId="EBI-396137">
        <id>Q9UJX2</id>
        <label>CDC23</label>
    </interactant>
    <organismsDiffer>false</organismsDiffer>
    <experiments>3</experiments>
</comment>
<comment type="interaction">
    <interactant intactId="EBI-6083685">
        <id>Q9H6U6</id>
    </interactant>
    <interactant intactId="EBI-10171858">
        <id>Q13363-2</id>
        <label>CTBP1</label>
    </interactant>
    <organismsDiffer>false</organismsDiffer>
    <experiments>3</experiments>
</comment>
<comment type="interaction">
    <interactant intactId="EBI-6083685">
        <id>Q9H6U6</id>
    </interactant>
    <interactant intactId="EBI-10171902">
        <id>P56545-3</id>
        <label>CTBP2</label>
    </interactant>
    <organismsDiffer>false</organismsDiffer>
    <experiments>3</experiments>
</comment>
<comment type="interaction">
    <interactant intactId="EBI-6083685">
        <id>Q9H6U6</id>
    </interactant>
    <interactant intactId="EBI-946080">
        <id>Q9BSU1</id>
        <label>PHAF1</label>
    </interactant>
    <organismsDiffer>false</organismsDiffer>
    <experiments>3</experiments>
</comment>
<comment type="interaction">
    <interactant intactId="EBI-6083685">
        <id>Q9H6U6</id>
    </interactant>
    <interactant intactId="EBI-742388">
        <id>Q9H8W4</id>
        <label>PLEKHF2</label>
    </interactant>
    <organismsDiffer>false</organismsDiffer>
    <experiments>3</experiments>
</comment>
<comment type="interaction">
    <interactant intactId="EBI-6083685">
        <id>Q9H6U6</id>
    </interactant>
    <interactant intactId="EBI-353844">
        <id>P08670</id>
        <label>VIM</label>
    </interactant>
    <organismsDiffer>false</organismsDiffer>
    <experiments>3</experiments>
</comment>
<comment type="interaction">
    <interactant intactId="EBI-10307911">
        <id>Q9H6U6-2</id>
    </interactant>
    <interactant intactId="EBI-946080">
        <id>Q9BSU1</id>
        <label>PHAF1</label>
    </interactant>
    <organismsDiffer>false</organismsDiffer>
    <experiments>3</experiments>
</comment>
<comment type="subcellular location">
    <subcellularLocation>
        <location evidence="7 8">Nucleus</location>
    </subcellularLocation>
    <subcellularLocation>
        <location evidence="7 8 9 11">Cytoplasm</location>
    </subcellularLocation>
    <subcellularLocation>
        <location evidence="1">Cytoplasm</location>
        <location evidence="1">Cytoskeleton</location>
    </subcellularLocation>
    <subcellularLocation>
        <location evidence="11">Preautophagosomal structure</location>
    </subcellularLocation>
    <text evidence="1 8 11">Localizes in the cytoplasm in stationary cells. Translocates from the cytoplasm to the leading edge in motile cells. Colocalizes with microtubules and intermediate filaments in both stationary and motile cells (By similarity). Associates with chromatin. Recruited to estrogen receptor-induced promoters in a PELP1-dependent manner. The BCAS3:PHAF1 complex is recruited to the preautophagosomal structures adjacent to the damaged mitochondria upon mitophagy in a PRKN-PINK1 dependent manner (PubMed:33499712).</text>
</comment>
<comment type="alternative products">
    <event type="alternative splicing"/>
    <isoform>
        <id>Q9H6U6-1</id>
        <name>2</name>
        <sequence type="displayed"/>
    </isoform>
    <isoform>
        <id>Q9H6U6-2</id>
        <name>1</name>
        <sequence type="described" ref="VSP_007858"/>
    </isoform>
    <isoform>
        <id>Q9H6U6-3</id>
        <name>3</name>
        <sequence type="described" ref="VSP_007858 VSP_007860"/>
    </isoform>
    <isoform>
        <id>Q9H6U6-8</id>
        <name>4</name>
        <sequence type="described" ref="VSP_007860"/>
    </isoform>
    <isoform>
        <id>Q9H6U6-7</id>
        <name>5</name>
        <name>Maaab1</name>
        <sequence type="described" ref="VSP_007858 VSP_040113"/>
    </isoform>
    <isoform>
        <id>Q9H6U6-6</id>
        <name>6</name>
        <name>Maaab2</name>
        <sequence type="described" ref="VSP_040112 VSP_007858"/>
    </isoform>
</comment>
<comment type="tissue specificity">
    <text evidence="4 7 9">Expressed in stomach, liver, lung, kidney, prostate, testis, thyroid gland, adrenal gland, brain, heart, skeletal muscle, colon, spleen, small intestine, placenta, blood leukocyte and mammary epithelial cells. Expressed in undifferentiated ES cells. Expressed in blood islands and nascent blood vessels derived from differentiated ES cells into embryoid bodies (BD). Expressed in endothelial cells. Not detected in brain. Expressed in brain tumors (at protein level). Expressed in brain. Highly expressed in breast cancers and in glioma cell lines.</text>
</comment>
<comment type="developmental stage">
    <text>Fetal.</text>
</comment>
<comment type="induction">
    <text evidence="7">By estrogen.</text>
</comment>
<comment type="domain">
    <text evidence="20">Has been proposed to contain 7 WD repeats. This prediction could not be reproduced.</text>
</comment>
<comment type="disease">
    <text>A chromosomal aberration involving BCAS3 has been found in some breast carcinoma cell lines. Translocation t(17;20)(q23;q13) with BCAS4.</text>
</comment>
<comment type="disease" evidence="12">
    <disease id="DI-06285">
        <name>Hengel-Maroofian-Schols syndrome</name>
        <acronym>HEMARS</acronym>
        <description>An autosomal recessive disorder characterized by severe global developmental delay apparent from infancy or early childhood. Affected individuals have delayed walking or inability to walk, impaired intellectual development with poor or absent speech, lower limb spasticity, poor overall growth, and dysmorphic facial features. Some patients develop seizures. Brain imaging shows thinning of the posterior part of the corpus callosum, delayed myelination, and cerebral and cerebellar atrophy.</description>
        <dbReference type="MIM" id="619641"/>
    </disease>
    <text>The disease is caused by variants affecting the gene represented in this entry.</text>
</comment>
<comment type="similarity">
    <text evidence="19">Belongs to the BCAS3 family.</text>
</comment>
<comment type="sequence caution" evidence="19">
    <conflict type="frameshift">
        <sequence resource="EMBL-CDS" id="AAF70324"/>
    </conflict>
</comment>
<comment type="sequence caution" evidence="19">
    <conflict type="erroneous initiation">
        <sequence resource="EMBL-CDS" id="AAL99634"/>
    </conflict>
</comment>
<comment type="sequence caution" evidence="19">
    <conflict type="erroneous initiation">
        <sequence resource="EMBL-CDS" id="BAA90966"/>
    </conflict>
    <text>Truncated N-terminus.</text>
</comment>
<comment type="sequence caution" evidence="19">
    <conflict type="erroneous initiation">
        <sequence resource="EMBL-CDS" id="BAB14078"/>
    </conflict>
    <text>Truncated N-terminus.</text>
</comment>
<comment type="sequence caution" evidence="19">
    <molecule>Isoform 5</molecule>
    <conflict type="frameshift">
        <sequence resource="EMBL" id="AK225757"/>
    </conflict>
</comment>
<comment type="sequence caution" evidence="19">
    <molecule>Isoform 5</molecule>
    <conflict type="frameshift">
        <sequence resource="EMBL-CDS" id="CAD54076"/>
    </conflict>
</comment>
<comment type="online information" name="Atlas of Genetics and Cytogenetics in Oncology and Haematology">
    <link uri="https://atlasgeneticsoncology.org/gene/766/BCAS3"/>
</comment>
<keyword id="KW-0007">Acetylation</keyword>
<keyword id="KW-0025">Alternative splicing</keyword>
<keyword id="KW-0037">Angiogenesis</keyword>
<keyword id="KW-0160">Chromosomal rearrangement</keyword>
<keyword id="KW-0963">Cytoplasm</keyword>
<keyword id="KW-0206">Cytoskeleton</keyword>
<keyword id="KW-0225">Disease variant</keyword>
<keyword id="KW-0991">Intellectual disability</keyword>
<keyword id="KW-1017">Isopeptide bond</keyword>
<keyword id="KW-0539">Nucleus</keyword>
<keyword id="KW-0597">Phosphoprotein</keyword>
<keyword id="KW-1267">Proteomics identification</keyword>
<keyword id="KW-0656">Proto-oncogene</keyword>
<keyword id="KW-1185">Reference proteome</keyword>
<keyword id="KW-0804">Transcription</keyword>
<keyword id="KW-0805">Transcription regulation</keyword>
<keyword id="KW-0832">Ubl conjugation</keyword>
<keyword id="KW-0853">WD repeat</keyword>